<keyword id="KW-0028">Amino-acid biosynthesis</keyword>
<keyword id="KW-0368">Histidine biosynthesis</keyword>
<keyword id="KW-0378">Hydrolase</keyword>
<keyword id="KW-0486">Methionine biosynthesis</keyword>
<keyword id="KW-0511">Multifunctional enzyme</keyword>
<keyword id="KW-0521">NADP</keyword>
<keyword id="KW-0554">One-carbon metabolism</keyword>
<keyword id="KW-0560">Oxidoreductase</keyword>
<keyword id="KW-0658">Purine biosynthesis</keyword>
<keyword id="KW-1185">Reference proteome</keyword>
<reference key="1">
    <citation type="journal article" date="2003" name="Nat. Biotechnol.">
        <title>The genome sequence of the entomopathogenic bacterium Photorhabdus luminescens.</title>
        <authorList>
            <person name="Duchaud E."/>
            <person name="Rusniok C."/>
            <person name="Frangeul L."/>
            <person name="Buchrieser C."/>
            <person name="Givaudan A."/>
            <person name="Taourit S."/>
            <person name="Bocs S."/>
            <person name="Boursaux-Eude C."/>
            <person name="Chandler M."/>
            <person name="Charles J.-F."/>
            <person name="Dassa E."/>
            <person name="Derose R."/>
            <person name="Derzelle S."/>
            <person name="Freyssinet G."/>
            <person name="Gaudriault S."/>
            <person name="Medigue C."/>
            <person name="Lanois A."/>
            <person name="Powell K."/>
            <person name="Siguier P."/>
            <person name="Vincent R."/>
            <person name="Wingate V."/>
            <person name="Zouine M."/>
            <person name="Glaser P."/>
            <person name="Boemare N."/>
            <person name="Danchin A."/>
            <person name="Kunst F."/>
        </authorList>
    </citation>
    <scope>NUCLEOTIDE SEQUENCE [LARGE SCALE GENOMIC DNA]</scope>
    <source>
        <strain>DSM 15139 / CIP 105565 / TT01</strain>
    </source>
</reference>
<feature type="chain" id="PRO_0000268431" description="Bifunctional protein FolD">
    <location>
        <begin position="1"/>
        <end position="291"/>
    </location>
</feature>
<feature type="binding site" evidence="1">
    <location>
        <begin position="166"/>
        <end position="168"/>
    </location>
    <ligand>
        <name>NADP(+)</name>
        <dbReference type="ChEBI" id="CHEBI:58349"/>
    </ligand>
</feature>
<feature type="binding site" evidence="1">
    <location>
        <position position="232"/>
    </location>
    <ligand>
        <name>NADP(+)</name>
        <dbReference type="ChEBI" id="CHEBI:58349"/>
    </ligand>
</feature>
<comment type="function">
    <text evidence="1">Catalyzes the oxidation of 5,10-methylenetetrahydrofolate to 5,10-methenyltetrahydrofolate and then the hydrolysis of 5,10-methenyltetrahydrofolate to 10-formyltetrahydrofolate.</text>
</comment>
<comment type="catalytic activity">
    <reaction evidence="1">
        <text>(6R)-5,10-methylene-5,6,7,8-tetrahydrofolate + NADP(+) = (6R)-5,10-methenyltetrahydrofolate + NADPH</text>
        <dbReference type="Rhea" id="RHEA:22812"/>
        <dbReference type="ChEBI" id="CHEBI:15636"/>
        <dbReference type="ChEBI" id="CHEBI:57455"/>
        <dbReference type="ChEBI" id="CHEBI:57783"/>
        <dbReference type="ChEBI" id="CHEBI:58349"/>
        <dbReference type="EC" id="1.5.1.5"/>
    </reaction>
</comment>
<comment type="catalytic activity">
    <reaction evidence="1">
        <text>(6R)-5,10-methenyltetrahydrofolate + H2O = (6R)-10-formyltetrahydrofolate + H(+)</text>
        <dbReference type="Rhea" id="RHEA:23700"/>
        <dbReference type="ChEBI" id="CHEBI:15377"/>
        <dbReference type="ChEBI" id="CHEBI:15378"/>
        <dbReference type="ChEBI" id="CHEBI:57455"/>
        <dbReference type="ChEBI" id="CHEBI:195366"/>
        <dbReference type="EC" id="3.5.4.9"/>
    </reaction>
</comment>
<comment type="pathway">
    <text evidence="1">One-carbon metabolism; tetrahydrofolate interconversion.</text>
</comment>
<comment type="subunit">
    <text evidence="1">Homodimer.</text>
</comment>
<comment type="similarity">
    <text evidence="1">Belongs to the tetrahydrofolate dehydrogenase/cyclohydrolase family.</text>
</comment>
<organism>
    <name type="scientific">Photorhabdus laumondii subsp. laumondii (strain DSM 15139 / CIP 105565 / TT01)</name>
    <name type="common">Photorhabdus luminescens subsp. laumondii</name>
    <dbReference type="NCBI Taxonomy" id="243265"/>
    <lineage>
        <taxon>Bacteria</taxon>
        <taxon>Pseudomonadati</taxon>
        <taxon>Pseudomonadota</taxon>
        <taxon>Gammaproteobacteria</taxon>
        <taxon>Enterobacterales</taxon>
        <taxon>Morganellaceae</taxon>
        <taxon>Photorhabdus</taxon>
    </lineage>
</organism>
<gene>
    <name evidence="1" type="primary">folD</name>
    <name type="ordered locus">plu4317</name>
</gene>
<accession>Q7MZH1</accession>
<name>FOLD_PHOLL</name>
<dbReference type="EC" id="1.5.1.5" evidence="1"/>
<dbReference type="EC" id="3.5.4.9" evidence="1"/>
<dbReference type="EMBL" id="BX571873">
    <property type="protein sequence ID" value="CAE16689.1"/>
    <property type="molecule type" value="Genomic_DNA"/>
</dbReference>
<dbReference type="RefSeq" id="WP_011148411.1">
    <property type="nucleotide sequence ID" value="NC_005126.1"/>
</dbReference>
<dbReference type="SMR" id="Q7MZH1"/>
<dbReference type="STRING" id="243265.plu4317"/>
<dbReference type="GeneID" id="48850528"/>
<dbReference type="KEGG" id="plu:plu4317"/>
<dbReference type="eggNOG" id="COG0190">
    <property type="taxonomic scope" value="Bacteria"/>
</dbReference>
<dbReference type="HOGENOM" id="CLU_034045_2_1_6"/>
<dbReference type="OrthoDB" id="9803580at2"/>
<dbReference type="UniPathway" id="UPA00193"/>
<dbReference type="Proteomes" id="UP000002514">
    <property type="component" value="Chromosome"/>
</dbReference>
<dbReference type="GO" id="GO:0005829">
    <property type="term" value="C:cytosol"/>
    <property type="evidence" value="ECO:0007669"/>
    <property type="project" value="TreeGrafter"/>
</dbReference>
<dbReference type="GO" id="GO:0004477">
    <property type="term" value="F:methenyltetrahydrofolate cyclohydrolase activity"/>
    <property type="evidence" value="ECO:0007669"/>
    <property type="project" value="UniProtKB-UniRule"/>
</dbReference>
<dbReference type="GO" id="GO:0004488">
    <property type="term" value="F:methylenetetrahydrofolate dehydrogenase (NADP+) activity"/>
    <property type="evidence" value="ECO:0007669"/>
    <property type="project" value="UniProtKB-UniRule"/>
</dbReference>
<dbReference type="GO" id="GO:0000105">
    <property type="term" value="P:L-histidine biosynthetic process"/>
    <property type="evidence" value="ECO:0007669"/>
    <property type="project" value="UniProtKB-KW"/>
</dbReference>
<dbReference type="GO" id="GO:0009086">
    <property type="term" value="P:methionine biosynthetic process"/>
    <property type="evidence" value="ECO:0007669"/>
    <property type="project" value="UniProtKB-KW"/>
</dbReference>
<dbReference type="GO" id="GO:0006164">
    <property type="term" value="P:purine nucleotide biosynthetic process"/>
    <property type="evidence" value="ECO:0007669"/>
    <property type="project" value="UniProtKB-KW"/>
</dbReference>
<dbReference type="GO" id="GO:0035999">
    <property type="term" value="P:tetrahydrofolate interconversion"/>
    <property type="evidence" value="ECO:0007669"/>
    <property type="project" value="UniProtKB-UniRule"/>
</dbReference>
<dbReference type="CDD" id="cd01080">
    <property type="entry name" value="NAD_bind_m-THF_DH_Cyclohyd"/>
    <property type="match status" value="1"/>
</dbReference>
<dbReference type="FunFam" id="3.40.50.10860:FF:000001">
    <property type="entry name" value="Bifunctional protein FolD"/>
    <property type="match status" value="1"/>
</dbReference>
<dbReference type="FunFam" id="3.40.50.720:FF:000006">
    <property type="entry name" value="Bifunctional protein FolD"/>
    <property type="match status" value="1"/>
</dbReference>
<dbReference type="Gene3D" id="3.40.50.10860">
    <property type="entry name" value="Leucine Dehydrogenase, chain A, domain 1"/>
    <property type="match status" value="1"/>
</dbReference>
<dbReference type="Gene3D" id="3.40.50.720">
    <property type="entry name" value="NAD(P)-binding Rossmann-like Domain"/>
    <property type="match status" value="1"/>
</dbReference>
<dbReference type="HAMAP" id="MF_01576">
    <property type="entry name" value="THF_DHG_CYH"/>
    <property type="match status" value="1"/>
</dbReference>
<dbReference type="InterPro" id="IPR046346">
    <property type="entry name" value="Aminoacid_DH-like_N_sf"/>
</dbReference>
<dbReference type="InterPro" id="IPR036291">
    <property type="entry name" value="NAD(P)-bd_dom_sf"/>
</dbReference>
<dbReference type="InterPro" id="IPR000672">
    <property type="entry name" value="THF_DH/CycHdrlase"/>
</dbReference>
<dbReference type="InterPro" id="IPR020630">
    <property type="entry name" value="THF_DH/CycHdrlase_cat_dom"/>
</dbReference>
<dbReference type="InterPro" id="IPR020867">
    <property type="entry name" value="THF_DH/CycHdrlase_CS"/>
</dbReference>
<dbReference type="InterPro" id="IPR020631">
    <property type="entry name" value="THF_DH/CycHdrlase_NAD-bd_dom"/>
</dbReference>
<dbReference type="NCBIfam" id="NF008058">
    <property type="entry name" value="PRK10792.1"/>
    <property type="match status" value="1"/>
</dbReference>
<dbReference type="NCBIfam" id="NF010783">
    <property type="entry name" value="PRK14186.1"/>
    <property type="match status" value="1"/>
</dbReference>
<dbReference type="PANTHER" id="PTHR48099:SF5">
    <property type="entry name" value="C-1-TETRAHYDROFOLATE SYNTHASE, CYTOPLASMIC"/>
    <property type="match status" value="1"/>
</dbReference>
<dbReference type="PANTHER" id="PTHR48099">
    <property type="entry name" value="C-1-TETRAHYDROFOLATE SYNTHASE, CYTOPLASMIC-RELATED"/>
    <property type="match status" value="1"/>
</dbReference>
<dbReference type="Pfam" id="PF00763">
    <property type="entry name" value="THF_DHG_CYH"/>
    <property type="match status" value="1"/>
</dbReference>
<dbReference type="Pfam" id="PF02882">
    <property type="entry name" value="THF_DHG_CYH_C"/>
    <property type="match status" value="1"/>
</dbReference>
<dbReference type="PRINTS" id="PR00085">
    <property type="entry name" value="THFDHDRGNASE"/>
</dbReference>
<dbReference type="SUPFAM" id="SSF53223">
    <property type="entry name" value="Aminoacid dehydrogenase-like, N-terminal domain"/>
    <property type="match status" value="1"/>
</dbReference>
<dbReference type="SUPFAM" id="SSF51735">
    <property type="entry name" value="NAD(P)-binding Rossmann-fold domains"/>
    <property type="match status" value="1"/>
</dbReference>
<dbReference type="PROSITE" id="PS00766">
    <property type="entry name" value="THF_DHG_CYH_1"/>
    <property type="match status" value="1"/>
</dbReference>
<dbReference type="PROSITE" id="PS00767">
    <property type="entry name" value="THF_DHG_CYH_2"/>
    <property type="match status" value="1"/>
</dbReference>
<evidence type="ECO:0000255" key="1">
    <source>
        <dbReference type="HAMAP-Rule" id="MF_01576"/>
    </source>
</evidence>
<protein>
    <recommendedName>
        <fullName evidence="1">Bifunctional protein FolD</fullName>
    </recommendedName>
    <domain>
        <recommendedName>
            <fullName evidence="1">Methylenetetrahydrofolate dehydrogenase</fullName>
            <ecNumber evidence="1">1.5.1.5</ecNumber>
        </recommendedName>
    </domain>
    <domain>
        <recommendedName>
            <fullName evidence="1">Methenyltetrahydrofolate cyclohydrolase</fullName>
            <ecNumber evidence="1">3.5.4.9</ecNumber>
        </recommendedName>
    </domain>
</protein>
<sequence>MPAKIIDGKTIAQTIRSEVAVRVQQRVAAGRRAPGLAVVLVGENPASQIYVASKRRACEEVGFVSRSYDLPDTTSEAELLNLIDQLNNDSDIDGILVQLPLPAGIDNVKVLERIQPDKDVDGFHPYNIGRLCQRAPKLRPCTPRGIATLLERCGINTYGLNAVIIGASNIVGRPMSLELLLAGCTTTVTHRFTKDLRHHVEQADLLIVAVGKPNFIPGEWIKPGAIVIDVGINRLEDGKVIGDVDFETASERASWISPVPGGVGPMTVATLIQNTLQACEEYHDVERIEGC</sequence>
<proteinExistence type="inferred from homology"/>